<feature type="chain" id="PRO_0000172256" description="S-ribosylhomocysteine lyase">
    <location>
        <begin position="1"/>
        <end position="156"/>
    </location>
</feature>
<feature type="binding site" evidence="1">
    <location>
        <position position="56"/>
    </location>
    <ligand>
        <name>Fe cation</name>
        <dbReference type="ChEBI" id="CHEBI:24875"/>
    </ligand>
</feature>
<feature type="binding site" evidence="1">
    <location>
        <position position="60"/>
    </location>
    <ligand>
        <name>Fe cation</name>
        <dbReference type="ChEBI" id="CHEBI:24875"/>
    </ligand>
</feature>
<feature type="binding site" evidence="1">
    <location>
        <position position="123"/>
    </location>
    <ligand>
        <name>Fe cation</name>
        <dbReference type="ChEBI" id="CHEBI:24875"/>
    </ligand>
</feature>
<name>LUXS_STAAR</name>
<dbReference type="EC" id="4.4.1.21" evidence="1"/>
<dbReference type="EMBL" id="BX571856">
    <property type="protein sequence ID" value="CAG41203.1"/>
    <property type="molecule type" value="Genomic_DNA"/>
</dbReference>
<dbReference type="RefSeq" id="WP_000164421.1">
    <property type="nucleotide sequence ID" value="NC_002952.2"/>
</dbReference>
<dbReference type="SMR" id="Q6GEU1"/>
<dbReference type="KEGG" id="sar:SAR2222"/>
<dbReference type="HOGENOM" id="CLU_107531_2_0_9"/>
<dbReference type="BRENDA" id="4.4.1.21">
    <property type="organism ID" value="3352"/>
</dbReference>
<dbReference type="Proteomes" id="UP000000596">
    <property type="component" value="Chromosome"/>
</dbReference>
<dbReference type="GO" id="GO:0005506">
    <property type="term" value="F:iron ion binding"/>
    <property type="evidence" value="ECO:0007669"/>
    <property type="project" value="InterPro"/>
</dbReference>
<dbReference type="GO" id="GO:0043768">
    <property type="term" value="F:S-ribosylhomocysteine lyase activity"/>
    <property type="evidence" value="ECO:0007669"/>
    <property type="project" value="UniProtKB-UniRule"/>
</dbReference>
<dbReference type="GO" id="GO:0009372">
    <property type="term" value="P:quorum sensing"/>
    <property type="evidence" value="ECO:0007669"/>
    <property type="project" value="UniProtKB-UniRule"/>
</dbReference>
<dbReference type="Gene3D" id="3.30.1360.80">
    <property type="entry name" value="S-ribosylhomocysteinase (LuxS)"/>
    <property type="match status" value="1"/>
</dbReference>
<dbReference type="HAMAP" id="MF_00091">
    <property type="entry name" value="LuxS"/>
    <property type="match status" value="1"/>
</dbReference>
<dbReference type="InterPro" id="IPR037005">
    <property type="entry name" value="LuxS_sf"/>
</dbReference>
<dbReference type="InterPro" id="IPR011249">
    <property type="entry name" value="Metalloenz_LuxS/M16"/>
</dbReference>
<dbReference type="InterPro" id="IPR003815">
    <property type="entry name" value="S-ribosylhomocysteinase"/>
</dbReference>
<dbReference type="NCBIfam" id="NF002604">
    <property type="entry name" value="PRK02260.1-4"/>
    <property type="match status" value="1"/>
</dbReference>
<dbReference type="PANTHER" id="PTHR35799">
    <property type="entry name" value="S-RIBOSYLHOMOCYSTEINE LYASE"/>
    <property type="match status" value="1"/>
</dbReference>
<dbReference type="PANTHER" id="PTHR35799:SF1">
    <property type="entry name" value="S-RIBOSYLHOMOCYSTEINE LYASE"/>
    <property type="match status" value="1"/>
</dbReference>
<dbReference type="Pfam" id="PF02664">
    <property type="entry name" value="LuxS"/>
    <property type="match status" value="1"/>
</dbReference>
<dbReference type="PIRSF" id="PIRSF006160">
    <property type="entry name" value="AI2"/>
    <property type="match status" value="1"/>
</dbReference>
<dbReference type="PRINTS" id="PR01487">
    <property type="entry name" value="LUXSPROTEIN"/>
</dbReference>
<dbReference type="SUPFAM" id="SSF63411">
    <property type="entry name" value="LuxS/MPP-like metallohydrolase"/>
    <property type="match status" value="1"/>
</dbReference>
<protein>
    <recommendedName>
        <fullName evidence="1">S-ribosylhomocysteine lyase</fullName>
        <ecNumber evidence="1">4.4.1.21</ecNumber>
    </recommendedName>
    <alternativeName>
        <fullName evidence="1">AI-2 synthesis protein</fullName>
    </alternativeName>
    <alternativeName>
        <fullName evidence="1">Autoinducer-2 production protein LuxS</fullName>
    </alternativeName>
</protein>
<evidence type="ECO:0000255" key="1">
    <source>
        <dbReference type="HAMAP-Rule" id="MF_00091"/>
    </source>
</evidence>
<comment type="function">
    <text evidence="1">Involved in the synthesis of autoinducer 2 (AI-2) which is secreted by bacteria and is used to communicate both the cell density and the metabolic potential of the environment. The regulation of gene expression in response to changes in cell density is called quorum sensing. Catalyzes the transformation of S-ribosylhomocysteine (RHC) to homocysteine (HC) and 4,5-dihydroxy-2,3-pentadione (DPD).</text>
</comment>
<comment type="catalytic activity">
    <reaction evidence="1">
        <text>S-(5-deoxy-D-ribos-5-yl)-L-homocysteine = (S)-4,5-dihydroxypentane-2,3-dione + L-homocysteine</text>
        <dbReference type="Rhea" id="RHEA:17753"/>
        <dbReference type="ChEBI" id="CHEBI:29484"/>
        <dbReference type="ChEBI" id="CHEBI:58195"/>
        <dbReference type="ChEBI" id="CHEBI:58199"/>
        <dbReference type="EC" id="4.4.1.21"/>
    </reaction>
</comment>
<comment type="cofactor">
    <cofactor evidence="1">
        <name>Fe cation</name>
        <dbReference type="ChEBI" id="CHEBI:24875"/>
    </cofactor>
    <text evidence="1">Binds 1 Fe cation per subunit.</text>
</comment>
<comment type="subunit">
    <text evidence="1">Homodimer.</text>
</comment>
<comment type="similarity">
    <text evidence="1">Belongs to the LuxS family.</text>
</comment>
<accession>Q6GEU1</accession>
<proteinExistence type="inferred from homology"/>
<organism>
    <name type="scientific">Staphylococcus aureus (strain MRSA252)</name>
    <dbReference type="NCBI Taxonomy" id="282458"/>
    <lineage>
        <taxon>Bacteria</taxon>
        <taxon>Bacillati</taxon>
        <taxon>Bacillota</taxon>
        <taxon>Bacilli</taxon>
        <taxon>Bacillales</taxon>
        <taxon>Staphylococcaceae</taxon>
        <taxon>Staphylococcus</taxon>
    </lineage>
</organism>
<keyword id="KW-0071">Autoinducer synthesis</keyword>
<keyword id="KW-0408">Iron</keyword>
<keyword id="KW-0456">Lyase</keyword>
<keyword id="KW-0479">Metal-binding</keyword>
<keyword id="KW-0673">Quorum sensing</keyword>
<gene>
    <name evidence="1" type="primary">luxS</name>
    <name type="ordered locus">SAR2222</name>
</gene>
<reference key="1">
    <citation type="journal article" date="2004" name="Proc. Natl. Acad. Sci. U.S.A.">
        <title>Complete genomes of two clinical Staphylococcus aureus strains: evidence for the rapid evolution of virulence and drug resistance.</title>
        <authorList>
            <person name="Holden M.T.G."/>
            <person name="Feil E.J."/>
            <person name="Lindsay J.A."/>
            <person name="Peacock S.J."/>
            <person name="Day N.P.J."/>
            <person name="Enright M.C."/>
            <person name="Foster T.J."/>
            <person name="Moore C.E."/>
            <person name="Hurst L."/>
            <person name="Atkin R."/>
            <person name="Barron A."/>
            <person name="Bason N."/>
            <person name="Bentley S.D."/>
            <person name="Chillingworth C."/>
            <person name="Chillingworth T."/>
            <person name="Churcher C."/>
            <person name="Clark L."/>
            <person name="Corton C."/>
            <person name="Cronin A."/>
            <person name="Doggett J."/>
            <person name="Dowd L."/>
            <person name="Feltwell T."/>
            <person name="Hance Z."/>
            <person name="Harris B."/>
            <person name="Hauser H."/>
            <person name="Holroyd S."/>
            <person name="Jagels K."/>
            <person name="James K.D."/>
            <person name="Lennard N."/>
            <person name="Line A."/>
            <person name="Mayes R."/>
            <person name="Moule S."/>
            <person name="Mungall K."/>
            <person name="Ormond D."/>
            <person name="Quail M.A."/>
            <person name="Rabbinowitsch E."/>
            <person name="Rutherford K.M."/>
            <person name="Sanders M."/>
            <person name="Sharp S."/>
            <person name="Simmonds M."/>
            <person name="Stevens K."/>
            <person name="Whitehead S."/>
            <person name="Barrell B.G."/>
            <person name="Spratt B.G."/>
            <person name="Parkhill J."/>
        </authorList>
    </citation>
    <scope>NUCLEOTIDE SEQUENCE [LARGE SCALE GENOMIC DNA]</scope>
    <source>
        <strain>MRSA252</strain>
    </source>
</reference>
<sequence length="156" mass="17514">MTKMNVESFNLDHTKVVAPFIRLAGTMEGLNGDVIHKYDIRFKQPNKEHMDMPGLHSLEHLMAENIRNHSDKVVDLSPMGCQTGFYVSFINHDNYDDVLNIVEATLNDVLNATEVPACNEVQCGWAASHSLEGAKTIAQAFLDKRNEWHDVFGTGK</sequence>